<organism>
    <name type="scientific">Influenza A virus (strain A/Equine/Prague/1/1956 H7N7)</name>
    <dbReference type="NCBI Taxonomy" id="380337"/>
    <lineage>
        <taxon>Viruses</taxon>
        <taxon>Riboviria</taxon>
        <taxon>Orthornavirae</taxon>
        <taxon>Negarnaviricota</taxon>
        <taxon>Polyploviricotina</taxon>
        <taxon>Insthoviricetes</taxon>
        <taxon>Articulavirales</taxon>
        <taxon>Orthomyxoviridae</taxon>
        <taxon>Alphainfluenzavirus</taxon>
        <taxon>Alphainfluenzavirus influenzae</taxon>
        <taxon>Influenza A virus</taxon>
    </lineage>
</organism>
<organismHost>
    <name type="scientific">Aves</name>
    <dbReference type="NCBI Taxonomy" id="8782"/>
</organismHost>
<organismHost>
    <name type="scientific">Equus caballus</name>
    <name type="common">Horse</name>
    <dbReference type="NCBI Taxonomy" id="9796"/>
</organismHost>
<organismHost>
    <name type="scientific">Homo sapiens</name>
    <name type="common">Human</name>
    <dbReference type="NCBI Taxonomy" id="9606"/>
</organismHost>
<organismHost>
    <name type="scientific">Phocidae</name>
    <name type="common">true seals</name>
    <dbReference type="NCBI Taxonomy" id="9709"/>
</organismHost>
<dbReference type="EC" id="3.2.1.18" evidence="1"/>
<dbReference type="EMBL" id="U85989">
    <property type="protein sequence ID" value="AAC57418.1"/>
    <property type="molecule type" value="mRNA"/>
</dbReference>
<dbReference type="EMBL" id="CY005802">
    <property type="protein sequence ID" value="ABB20501.1"/>
    <property type="molecule type" value="Genomic_RNA"/>
</dbReference>
<dbReference type="EMBL" id="K01008">
    <property type="protein sequence ID" value="AAA43411.1"/>
    <property type="molecule type" value="Genomic_RNA"/>
</dbReference>
<dbReference type="SMR" id="P88838"/>
<dbReference type="CAZy" id="GH34">
    <property type="family name" value="Glycoside Hydrolase Family 34"/>
</dbReference>
<dbReference type="GlyCosmos" id="P88838">
    <property type="glycosylation" value="13 sites, No reported glycans"/>
</dbReference>
<dbReference type="PRO" id="PR:P88838"/>
<dbReference type="Proteomes" id="UP000121173">
    <property type="component" value="Genome"/>
</dbReference>
<dbReference type="GO" id="GO:0020002">
    <property type="term" value="C:host cell plasma membrane"/>
    <property type="evidence" value="ECO:0007669"/>
    <property type="project" value="UniProtKB-SubCell"/>
</dbReference>
<dbReference type="GO" id="GO:0016020">
    <property type="term" value="C:membrane"/>
    <property type="evidence" value="ECO:0007669"/>
    <property type="project" value="UniProtKB-UniRule"/>
</dbReference>
<dbReference type="GO" id="GO:0055036">
    <property type="term" value="C:virion membrane"/>
    <property type="evidence" value="ECO:0007669"/>
    <property type="project" value="UniProtKB-SubCell"/>
</dbReference>
<dbReference type="GO" id="GO:0004308">
    <property type="term" value="F:exo-alpha-sialidase activity"/>
    <property type="evidence" value="ECO:0007669"/>
    <property type="project" value="UniProtKB-UniRule"/>
</dbReference>
<dbReference type="GO" id="GO:0046872">
    <property type="term" value="F:metal ion binding"/>
    <property type="evidence" value="ECO:0007669"/>
    <property type="project" value="UniProtKB-UniRule"/>
</dbReference>
<dbReference type="GO" id="GO:0005975">
    <property type="term" value="P:carbohydrate metabolic process"/>
    <property type="evidence" value="ECO:0007669"/>
    <property type="project" value="InterPro"/>
</dbReference>
<dbReference type="GO" id="GO:0046761">
    <property type="term" value="P:viral budding from plasma membrane"/>
    <property type="evidence" value="ECO:0007669"/>
    <property type="project" value="UniProtKB-UniRule"/>
</dbReference>
<dbReference type="Gene3D" id="2.120.10.10">
    <property type="match status" value="1"/>
</dbReference>
<dbReference type="HAMAP" id="MF_04071">
    <property type="entry name" value="INFV_NRAM"/>
    <property type="match status" value="1"/>
</dbReference>
<dbReference type="InterPro" id="IPR001860">
    <property type="entry name" value="Glyco_hydro_34"/>
</dbReference>
<dbReference type="InterPro" id="IPR036278">
    <property type="entry name" value="Sialidase_sf"/>
</dbReference>
<dbReference type="Pfam" id="PF00064">
    <property type="entry name" value="Neur"/>
    <property type="match status" value="1"/>
</dbReference>
<dbReference type="SUPFAM" id="SSF50939">
    <property type="entry name" value="Sialidases"/>
    <property type="match status" value="1"/>
</dbReference>
<gene>
    <name evidence="1" type="primary">NA</name>
</gene>
<protein>
    <recommendedName>
        <fullName evidence="1">Neuraminidase</fullName>
        <ecNumber evidence="1">3.2.1.18</ecNumber>
    </recommendedName>
</protein>
<comment type="function">
    <text evidence="1">Catalyzes the removal of terminal sialic acid residues from viral and cellular glycoconjugates. Cleaves off the terminal sialic acids on the glycosylated HA during virus budding to facilitate virus release. Additionally helps virus spread through the circulation by further removing sialic acids from the cell surface. These cleavages prevent self-aggregation and ensure the efficient spread of the progeny virus from cell to cell. Otherwise, infection would be limited to one round of replication. Described as a receptor-destroying enzyme because it cleaves a terminal sialic acid from the cellular receptors. May facilitate viral invasion of the upper airways by cleaving the sialic acid moieties on the mucin of the airway epithelial cells. Likely to plays a role in the budding process through its association with lipid rafts during intracellular transport. May additionally display a raft-association independent effect on budding. Plays a role in the determination of host range restriction on replication and virulence. Sialidase activity in late endosome/lysosome traffic seems to enhance virus replication.</text>
</comment>
<comment type="catalytic activity">
    <reaction evidence="1">
        <text>Hydrolysis of alpha-(2-&gt;3)-, alpha-(2-&gt;6)-, alpha-(2-&gt;8)- glycosidic linkages of terminal sialic acid residues in oligosaccharides, glycoproteins, glycolipids, colominic acid and synthetic substrates.</text>
        <dbReference type="EC" id="3.2.1.18"/>
    </reaction>
</comment>
<comment type="cofactor">
    <cofactor evidence="1">
        <name>Ca(2+)</name>
        <dbReference type="ChEBI" id="CHEBI:29108"/>
    </cofactor>
</comment>
<comment type="activity regulation">
    <text evidence="1">Inhibited by the neuraminidase inhibitors zanamivir (Relenza) and oseltamivir (Tamiflu). These drugs interfere with the release of progeny virus from infected cells and are effective against all influenza strains. Resistance to neuraminidase inhibitors is quite rare.</text>
</comment>
<comment type="subunit">
    <text evidence="1">Homotetramer.</text>
</comment>
<comment type="subcellular location">
    <subcellularLocation>
        <location evidence="1">Virion membrane</location>
    </subcellularLocation>
    <subcellularLocation>
        <location evidence="1">Host apical cell membrane</location>
        <topology evidence="1">Single-pass type II membrane protein</topology>
    </subcellularLocation>
    <text evidence="1">Preferentially accumulates at the apical plasma membrane in infected polarized epithelial cells, which is the virus assembly site. Uses lipid rafts for cell surface transport and apical sorting. In the virion, forms a mushroom-shaped spike on the surface of the membrane.</text>
</comment>
<comment type="domain">
    <text evidence="1">Intact N-terminus is essential for virion morphogenesis. Possesses two apical sorting signals, one in the ectodomain, which is likely to be a glycan, and the other in the transmembrane domain. The transmembrane domain also plays a role in lipid raft association.</text>
</comment>
<comment type="PTM">
    <text evidence="1">N-glycosylated.</text>
</comment>
<comment type="miscellaneous">
    <text>The influenza A genome consist of 8 RNA segments. Genetic variation of hemagglutinin and/or neuraminidase genes results in the emergence of new influenza strains. The mechanism of variation can be the result of point mutations or the result of genetic reassortment between segments of two different strains.</text>
</comment>
<comment type="similarity">
    <text evidence="1">Belongs to the glycosyl hydrolase 34 family.</text>
</comment>
<evidence type="ECO:0000255" key="1">
    <source>
        <dbReference type="HAMAP-Rule" id="MF_04071"/>
    </source>
</evidence>
<name>NRAM_I56A3</name>
<keyword id="KW-0106">Calcium</keyword>
<keyword id="KW-1015">Disulfide bond</keyword>
<keyword id="KW-0325">Glycoprotein</keyword>
<keyword id="KW-0326">Glycosidase</keyword>
<keyword id="KW-1032">Host cell membrane</keyword>
<keyword id="KW-1043">Host membrane</keyword>
<keyword id="KW-0378">Hydrolase</keyword>
<keyword id="KW-0472">Membrane</keyword>
<keyword id="KW-0479">Metal-binding</keyword>
<keyword id="KW-0735">Signal-anchor</keyword>
<keyword id="KW-0812">Transmembrane</keyword>
<keyword id="KW-1133">Transmembrane helix</keyword>
<keyword id="KW-0946">Virion</keyword>
<sequence length="469" mass="51890">MNPNQKLFASSGIAIALGIINLLIGISNMSLNISLYSKGENHKSDNLTCTNINQNNTTMVNTYINNTTIIDKNTKMENPGYLLLNKSLCNVEGWVVIAKDNAIRFGESEQIIVTREPYVSCDPLSCKMYALHQGTTIRNKHSNGTTHDRTAFRGLISTPLGNPPTVSNSEFICVGWSSTSCHDGVSRMTICVQGNNENATATVYYNKRLTTTIKTWAKNILRTQESECVCHNSTCVVVMTDGPANNQAFTKVIYFHKGTIIKEEPLKGSAKHIEECSCYGHNQRVTCVCRDNWQGANRPVIEIDMNNLEHTSRYICTGVLTDTSRPKDKAIGECFNPITGSPGAPGIKGFGFLNENNTWLGRTISPKLRSGFEMLKIPNAGTDPDSKIKERQEIVGNDNWSGYSGSFIDYWNDNSECYNPCFYVELIRGRPEEAKYVEWTSNSLIALCGSPIPVGSGSFPDGAQIKYFS</sequence>
<accession>P88838</accession>
<accession>Q20P40</accession>
<accession>Q83983</accession>
<proteinExistence type="evidence at transcript level"/>
<feature type="chain" id="PRO_0000280138" description="Neuraminidase">
    <location>
        <begin position="1"/>
        <end position="469"/>
    </location>
</feature>
<feature type="topological domain" description="Intravirion" evidence="1">
    <location>
        <begin position="1"/>
        <end position="6"/>
    </location>
</feature>
<feature type="transmembrane region" description="Helical" evidence="1">
    <location>
        <begin position="7"/>
        <end position="27"/>
    </location>
</feature>
<feature type="topological domain" description="Virion surface" evidence="1">
    <location>
        <begin position="28"/>
        <end position="469"/>
    </location>
</feature>
<feature type="region of interest" description="Involved in apical transport and lipid raft association" evidence="1">
    <location>
        <begin position="11"/>
        <end position="33"/>
    </location>
</feature>
<feature type="region of interest" description="Hypervariable stalk region" evidence="1">
    <location>
        <begin position="36"/>
        <end position="85"/>
    </location>
</feature>
<feature type="region of interest" description="Head of neuraminidase" evidence="1">
    <location>
        <begin position="88"/>
        <end position="469"/>
    </location>
</feature>
<feature type="active site" description="Proton donor/acceptor" evidence="1">
    <location>
        <position position="148"/>
    </location>
</feature>
<feature type="active site" description="Nucleophile" evidence="1">
    <location>
        <position position="403"/>
    </location>
</feature>
<feature type="binding site" evidence="1">
    <location>
        <position position="115"/>
    </location>
    <ligand>
        <name>substrate</name>
    </ligand>
</feature>
<feature type="binding site" evidence="1">
    <location>
        <position position="149"/>
    </location>
    <ligand>
        <name>substrate</name>
    </ligand>
</feature>
<feature type="binding site" evidence="1">
    <location>
        <begin position="274"/>
        <end position="275"/>
    </location>
    <ligand>
        <name>substrate</name>
    </ligand>
</feature>
<feature type="binding site" evidence="1">
    <location>
        <position position="290"/>
    </location>
    <ligand>
        <name>substrate</name>
    </ligand>
</feature>
<feature type="binding site" evidence="1">
    <location>
        <position position="291"/>
    </location>
    <ligand>
        <name>Ca(2+)</name>
        <dbReference type="ChEBI" id="CHEBI:29108"/>
    </ligand>
</feature>
<feature type="binding site" evidence="1">
    <location>
        <position position="295"/>
    </location>
    <ligand>
        <name>Ca(2+)</name>
        <dbReference type="ChEBI" id="CHEBI:29108"/>
    </ligand>
</feature>
<feature type="binding site" evidence="1">
    <location>
        <position position="322"/>
    </location>
    <ligand>
        <name>Ca(2+)</name>
        <dbReference type="ChEBI" id="CHEBI:29108"/>
    </ligand>
</feature>
<feature type="binding site" evidence="1">
    <location>
        <position position="369"/>
    </location>
    <ligand>
        <name>substrate</name>
    </ligand>
</feature>
<feature type="glycosylation site" description="N-linked (GlcNAc...) asparagine; by host" evidence="1">
    <location>
        <position position="28"/>
    </location>
</feature>
<feature type="glycosylation site" description="N-linked (GlcNAc...) asparagine; by host" evidence="1">
    <location>
        <position position="32"/>
    </location>
</feature>
<feature type="glycosylation site" description="N-linked (GlcNAc...) asparagine; by host" evidence="1">
    <location>
        <position position="46"/>
    </location>
</feature>
<feature type="glycosylation site" description="N-linked (GlcNAc...) asparagine; by host" evidence="1">
    <location>
        <position position="55"/>
    </location>
</feature>
<feature type="glycosylation site" description="N-linked (GlcNAc...) asparagine; by host" evidence="1">
    <location>
        <position position="56"/>
    </location>
</feature>
<feature type="glycosylation site" description="N-linked (GlcNAc...) asparagine; by host" evidence="1">
    <location>
        <position position="65"/>
    </location>
</feature>
<feature type="glycosylation site" description="N-linked (GlcNAc...) asparagine; by host" evidence="1">
    <location>
        <position position="66"/>
    </location>
</feature>
<feature type="glycosylation site" description="N-linked (GlcNAc...) asparagine; by host" evidence="1">
    <location>
        <position position="85"/>
    </location>
</feature>
<feature type="glycosylation site" description="N-linked (GlcNAc...) asparagine; by host" evidence="1">
    <location>
        <position position="143"/>
    </location>
</feature>
<feature type="glycosylation site" description="N-linked (GlcNAc...) asparagine; by host" evidence="1">
    <location>
        <position position="198"/>
    </location>
</feature>
<feature type="glycosylation site" description="N-linked (GlcNAc...) asparagine; by host" evidence="1">
    <location>
        <position position="232"/>
    </location>
</feature>
<feature type="glycosylation site" description="N-linked (GlcNAc...) asparagine; by host" evidence="1">
    <location>
        <position position="356"/>
    </location>
</feature>
<feature type="glycosylation site" description="N-linked (GlcNAc...) asparagine; by host" evidence="1">
    <location>
        <position position="399"/>
    </location>
</feature>
<feature type="disulfide bond" evidence="1">
    <location>
        <begin position="89"/>
        <end position="417"/>
    </location>
</feature>
<feature type="disulfide bond" evidence="1">
    <location>
        <begin position="121"/>
        <end position="126"/>
    </location>
</feature>
<feature type="disulfide bond" evidence="1">
    <location>
        <begin position="181"/>
        <end position="228"/>
    </location>
</feature>
<feature type="disulfide bond" evidence="1">
    <location>
        <begin position="230"/>
        <end position="235"/>
    </location>
</feature>
<feature type="disulfide bond" evidence="1">
    <location>
        <begin position="276"/>
        <end position="289"/>
    </location>
</feature>
<feature type="disulfide bond" evidence="1">
    <location>
        <begin position="278"/>
        <end position="287"/>
    </location>
</feature>
<feature type="disulfide bond" evidence="1">
    <location>
        <begin position="316"/>
        <end position="334"/>
    </location>
</feature>
<feature type="disulfide bond" evidence="1">
    <location>
        <begin position="421"/>
        <end position="448"/>
    </location>
</feature>
<feature type="sequence conflict" description="In Ref. 3; AAA43411." ref="3">
    <original>N</original>
    <variation>K</variation>
    <location>
        <position position="85"/>
    </location>
</feature>
<reference key="1">
    <citation type="journal article" date="1997" name="Arch. Virol.">
        <title>Genetic characterisation of an influenza A virus of unusual subtype (H1N7) isolated from pigs in England.</title>
        <authorList>
            <person name="Brown I.H."/>
            <person name="Hill M.L."/>
            <person name="Harris P.A."/>
            <person name="Alexander D.J."/>
            <person name="McCauley J.W."/>
        </authorList>
    </citation>
    <scope>NUCLEOTIDE SEQUENCE [MRNA]</scope>
</reference>
<reference key="2">
    <citation type="journal article" date="2006" name="Science">
        <title>Large-scale sequence analysis of avian influenza isolates.</title>
        <authorList>
            <person name="Obenauer J.C."/>
            <person name="Denson J."/>
            <person name="Mehta P.K."/>
            <person name="Su X."/>
            <person name="Mukatira S."/>
            <person name="Finkelstein D.B."/>
            <person name="Xu X."/>
            <person name="Wang J."/>
            <person name="Ma J."/>
            <person name="Fan Y."/>
            <person name="Rakestraw K.M."/>
            <person name="Webster R.G."/>
            <person name="Hoffmann E."/>
            <person name="Krauss S."/>
            <person name="Zheng J."/>
            <person name="Zhang Z."/>
            <person name="Naeve C.W."/>
        </authorList>
    </citation>
    <scope>NUCLEOTIDE SEQUENCE [GENOMIC RNA]</scope>
</reference>
<reference key="3">
    <citation type="book" date="1982" name="Genetic variation among influenza viruses">
        <title>Sequence variation at the 3' end of the neuraminidase gene from 39 influenza type A viruses.</title>
        <editorList>
            <person name="Nayak D."/>
            <person name="Fox C.F."/>
        </editorList>
        <authorList>
            <person name="Blok J."/>
        </authorList>
    </citation>
    <scope>NUCLEOTIDE SEQUENCE [GENOMIC RNA] OF 1-88</scope>
</reference>
<reference key="4">
    <citation type="journal article" date="2004" name="Virus Res.">
        <title>Assembly and budding of influenza virus.</title>
        <authorList>
            <person name="Nayak D.P."/>
            <person name="Hui E.K."/>
            <person name="Barman S."/>
        </authorList>
    </citation>
    <scope>REVIEW</scope>
</reference>
<reference key="5">
    <citation type="journal article" date="2005" name="N. Engl. J. Med.">
        <title>Neuraminidase inhibitors for influenza.</title>
        <authorList>
            <person name="Moscona A."/>
        </authorList>
    </citation>
    <scope>REVIEW</scope>
</reference>
<reference key="6">
    <citation type="journal article" date="2005" name="Biol. Pharm. Bull.">
        <title>Sialobiology of influenza: molecular mechanism of host range variation of influenza viruses.</title>
        <authorList>
            <person name="Suzuki Y."/>
        </authorList>
    </citation>
    <scope>REVIEW</scope>
</reference>